<gene>
    <name type="primary">Tmprss11f</name>
    <name type="synonym">Hatl4</name>
</gene>
<proteinExistence type="evidence at transcript level"/>
<organism>
    <name type="scientific">Mus musculus</name>
    <name type="common">Mouse</name>
    <dbReference type="NCBI Taxonomy" id="10090"/>
    <lineage>
        <taxon>Eukaryota</taxon>
        <taxon>Metazoa</taxon>
        <taxon>Chordata</taxon>
        <taxon>Craniata</taxon>
        <taxon>Vertebrata</taxon>
        <taxon>Euteleostomi</taxon>
        <taxon>Mammalia</taxon>
        <taxon>Eutheria</taxon>
        <taxon>Euarchontoglires</taxon>
        <taxon>Glires</taxon>
        <taxon>Rodentia</taxon>
        <taxon>Myomorpha</taxon>
        <taxon>Muroidea</taxon>
        <taxon>Muridae</taxon>
        <taxon>Murinae</taxon>
        <taxon>Mus</taxon>
        <taxon>Mus</taxon>
    </lineage>
</organism>
<name>TM11F_MOUSE</name>
<sequence length="439" mass="49776">MMYAPVEFSQTAYPRIEYQRRQQQFWDPIRLALFTLAIVAIVGITIGIVTHFVVEDDKSFYYLASFQVTSIKYRENYGIRSSREFIERSHQIERMMSRIFRRSSGVGRFIKSHVIKISPDEQGVNILIVLMFRYPSTDSAERIKKRIERTFYQSLKIKQLPLTISMPSFSLTPIDSKKMRNLLNSRCGIRMSSSNIPLPASSSTERIVQGRETAMEGEWPWQASLQLIGAGHQCGATLISNTWLLTAAHCFWKNRDPTKWIVTFGTTITPPLVKRSVGKIIIHEEYHRDTNENDIALAQLTTRVEFSNVVQRVCLPDSSMKLPPKTSVFVTGFGSIVDDGPTQNKLRQARVETIGSDVCNRKDVYDGLITPGMLCAGFMEGKIDACKGDSGGPLVYDNRDIWYIVGIVSWGQSCALPNKPGVYTRVTKYRDWIASKTGL</sequence>
<comment type="function">
    <text evidence="1">Probable serine protease.</text>
</comment>
<comment type="subcellular location">
    <subcellularLocation>
        <location evidence="5">Membrane</location>
        <topology evidence="5">Single-pass type II membrane protein</topology>
    </subcellularLocation>
</comment>
<comment type="similarity">
    <text evidence="4">Belongs to the peptidase S1 family.</text>
</comment>
<reference key="1">
    <citation type="journal article" date="2005" name="Science">
        <title>The transcriptional landscape of the mammalian genome.</title>
        <authorList>
            <person name="Carninci P."/>
            <person name="Kasukawa T."/>
            <person name="Katayama S."/>
            <person name="Gough J."/>
            <person name="Frith M.C."/>
            <person name="Maeda N."/>
            <person name="Oyama R."/>
            <person name="Ravasi T."/>
            <person name="Lenhard B."/>
            <person name="Wells C."/>
            <person name="Kodzius R."/>
            <person name="Shimokawa K."/>
            <person name="Bajic V.B."/>
            <person name="Brenner S.E."/>
            <person name="Batalov S."/>
            <person name="Forrest A.R."/>
            <person name="Zavolan M."/>
            <person name="Davis M.J."/>
            <person name="Wilming L.G."/>
            <person name="Aidinis V."/>
            <person name="Allen J.E."/>
            <person name="Ambesi-Impiombato A."/>
            <person name="Apweiler R."/>
            <person name="Aturaliya R.N."/>
            <person name="Bailey T.L."/>
            <person name="Bansal M."/>
            <person name="Baxter L."/>
            <person name="Beisel K.W."/>
            <person name="Bersano T."/>
            <person name="Bono H."/>
            <person name="Chalk A.M."/>
            <person name="Chiu K.P."/>
            <person name="Choudhary V."/>
            <person name="Christoffels A."/>
            <person name="Clutterbuck D.R."/>
            <person name="Crowe M.L."/>
            <person name="Dalla E."/>
            <person name="Dalrymple B.P."/>
            <person name="de Bono B."/>
            <person name="Della Gatta G."/>
            <person name="di Bernardo D."/>
            <person name="Down T."/>
            <person name="Engstrom P."/>
            <person name="Fagiolini M."/>
            <person name="Faulkner G."/>
            <person name="Fletcher C.F."/>
            <person name="Fukushima T."/>
            <person name="Furuno M."/>
            <person name="Futaki S."/>
            <person name="Gariboldi M."/>
            <person name="Georgii-Hemming P."/>
            <person name="Gingeras T.R."/>
            <person name="Gojobori T."/>
            <person name="Green R.E."/>
            <person name="Gustincich S."/>
            <person name="Harbers M."/>
            <person name="Hayashi Y."/>
            <person name="Hensch T.K."/>
            <person name="Hirokawa N."/>
            <person name="Hill D."/>
            <person name="Huminiecki L."/>
            <person name="Iacono M."/>
            <person name="Ikeo K."/>
            <person name="Iwama A."/>
            <person name="Ishikawa T."/>
            <person name="Jakt M."/>
            <person name="Kanapin A."/>
            <person name="Katoh M."/>
            <person name="Kawasawa Y."/>
            <person name="Kelso J."/>
            <person name="Kitamura H."/>
            <person name="Kitano H."/>
            <person name="Kollias G."/>
            <person name="Krishnan S.P."/>
            <person name="Kruger A."/>
            <person name="Kummerfeld S.K."/>
            <person name="Kurochkin I.V."/>
            <person name="Lareau L.F."/>
            <person name="Lazarevic D."/>
            <person name="Lipovich L."/>
            <person name="Liu J."/>
            <person name="Liuni S."/>
            <person name="McWilliam S."/>
            <person name="Madan Babu M."/>
            <person name="Madera M."/>
            <person name="Marchionni L."/>
            <person name="Matsuda H."/>
            <person name="Matsuzawa S."/>
            <person name="Miki H."/>
            <person name="Mignone F."/>
            <person name="Miyake S."/>
            <person name="Morris K."/>
            <person name="Mottagui-Tabar S."/>
            <person name="Mulder N."/>
            <person name="Nakano N."/>
            <person name="Nakauchi H."/>
            <person name="Ng P."/>
            <person name="Nilsson R."/>
            <person name="Nishiguchi S."/>
            <person name="Nishikawa S."/>
            <person name="Nori F."/>
            <person name="Ohara O."/>
            <person name="Okazaki Y."/>
            <person name="Orlando V."/>
            <person name="Pang K.C."/>
            <person name="Pavan W.J."/>
            <person name="Pavesi G."/>
            <person name="Pesole G."/>
            <person name="Petrovsky N."/>
            <person name="Piazza S."/>
            <person name="Reed J."/>
            <person name="Reid J.F."/>
            <person name="Ring B.Z."/>
            <person name="Ringwald M."/>
            <person name="Rost B."/>
            <person name="Ruan Y."/>
            <person name="Salzberg S.L."/>
            <person name="Sandelin A."/>
            <person name="Schneider C."/>
            <person name="Schoenbach C."/>
            <person name="Sekiguchi K."/>
            <person name="Semple C.A."/>
            <person name="Seno S."/>
            <person name="Sessa L."/>
            <person name="Sheng Y."/>
            <person name="Shibata Y."/>
            <person name="Shimada H."/>
            <person name="Shimada K."/>
            <person name="Silva D."/>
            <person name="Sinclair B."/>
            <person name="Sperling S."/>
            <person name="Stupka E."/>
            <person name="Sugiura K."/>
            <person name="Sultana R."/>
            <person name="Takenaka Y."/>
            <person name="Taki K."/>
            <person name="Tammoja K."/>
            <person name="Tan S.L."/>
            <person name="Tang S."/>
            <person name="Taylor M.S."/>
            <person name="Tegner J."/>
            <person name="Teichmann S.A."/>
            <person name="Ueda H.R."/>
            <person name="van Nimwegen E."/>
            <person name="Verardo R."/>
            <person name="Wei C.L."/>
            <person name="Yagi K."/>
            <person name="Yamanishi H."/>
            <person name="Zabarovsky E."/>
            <person name="Zhu S."/>
            <person name="Zimmer A."/>
            <person name="Hide W."/>
            <person name="Bult C."/>
            <person name="Grimmond S.M."/>
            <person name="Teasdale R.D."/>
            <person name="Liu E.T."/>
            <person name="Brusic V."/>
            <person name="Quackenbush J."/>
            <person name="Wahlestedt C."/>
            <person name="Mattick J.S."/>
            <person name="Hume D.A."/>
            <person name="Kai C."/>
            <person name="Sasaki D."/>
            <person name="Tomaru Y."/>
            <person name="Fukuda S."/>
            <person name="Kanamori-Katayama M."/>
            <person name="Suzuki M."/>
            <person name="Aoki J."/>
            <person name="Arakawa T."/>
            <person name="Iida J."/>
            <person name="Imamura K."/>
            <person name="Itoh M."/>
            <person name="Kato T."/>
            <person name="Kawaji H."/>
            <person name="Kawagashira N."/>
            <person name="Kawashima T."/>
            <person name="Kojima M."/>
            <person name="Kondo S."/>
            <person name="Konno H."/>
            <person name="Nakano K."/>
            <person name="Ninomiya N."/>
            <person name="Nishio T."/>
            <person name="Okada M."/>
            <person name="Plessy C."/>
            <person name="Shibata K."/>
            <person name="Shiraki T."/>
            <person name="Suzuki S."/>
            <person name="Tagami M."/>
            <person name="Waki K."/>
            <person name="Watahiki A."/>
            <person name="Okamura-Oho Y."/>
            <person name="Suzuki H."/>
            <person name="Kawai J."/>
            <person name="Hayashizaki Y."/>
        </authorList>
    </citation>
    <scope>NUCLEOTIDE SEQUENCE [LARGE SCALE MRNA]</scope>
    <source>
        <strain>C57BL/6J</strain>
        <tissue>Skin</tissue>
    </source>
</reference>
<reference key="2">
    <citation type="journal article" date="2004" name="Genome Res.">
        <title>The status, quality, and expansion of the NIH full-length cDNA project: the Mammalian Gene Collection (MGC).</title>
        <authorList>
            <consortium name="The MGC Project Team"/>
        </authorList>
    </citation>
    <scope>NUCLEOTIDE SEQUENCE [LARGE SCALE MRNA]</scope>
    <source>
        <tissue>Brain</tissue>
    </source>
</reference>
<reference key="3">
    <citation type="journal article" date="2004" name="J. Biol. Chem.">
        <title>Mouse DESC1 is located within a cluster of seven DESC1-like genes and encodes a type II transmembrane serine protease that forms serpin inhibitory complexes.</title>
        <authorList>
            <person name="Hobson J.P."/>
            <person name="Netzel-Arnett S."/>
            <person name="Szabo R."/>
            <person name="Rehault S.M."/>
            <person name="Church F.C."/>
            <person name="Strickland D.K."/>
            <person name="Lawrence D.A."/>
            <person name="Antalis T.M."/>
            <person name="Bugge T.H."/>
        </authorList>
    </citation>
    <scope>IDENTIFICATION</scope>
</reference>
<feature type="chain" id="PRO_0000299323" description="Transmembrane protease serine 11F">
    <location>
        <begin position="1"/>
        <end position="439"/>
    </location>
</feature>
<feature type="topological domain" description="Cytoplasmic" evidence="2">
    <location>
        <begin position="1"/>
        <end position="33"/>
    </location>
</feature>
<feature type="transmembrane region" description="Helical; Signal-anchor for type II membrane protein" evidence="2">
    <location>
        <begin position="34"/>
        <end position="54"/>
    </location>
</feature>
<feature type="topological domain" description="Extracellular" evidence="2">
    <location>
        <begin position="55"/>
        <end position="439"/>
    </location>
</feature>
<feature type="domain" description="SEA" evidence="3">
    <location>
        <begin position="58"/>
        <end position="176"/>
    </location>
</feature>
<feature type="domain" description="Peptidase S1" evidence="4">
    <location>
        <begin position="207"/>
        <end position="438"/>
    </location>
</feature>
<feature type="active site" description="Charge relay system" evidence="1">
    <location>
        <position position="249"/>
    </location>
</feature>
<feature type="active site" description="Charge relay system" evidence="1">
    <location>
        <position position="294"/>
    </location>
</feature>
<feature type="active site" description="Charge relay system" evidence="1">
    <location>
        <position position="390"/>
    </location>
</feature>
<feature type="disulfide bond" evidence="4">
    <location>
        <begin position="234"/>
        <end position="250"/>
    </location>
</feature>
<feature type="disulfide bond" evidence="4">
    <location>
        <begin position="359"/>
        <end position="375"/>
    </location>
</feature>
<feature type="disulfide bond" evidence="4">
    <location>
        <begin position="386"/>
        <end position="414"/>
    </location>
</feature>
<protein>
    <recommendedName>
        <fullName>Transmembrane protease serine 11F</fullName>
        <ecNumber>3.4.21.-</ecNumber>
    </recommendedName>
    <alternativeName>
        <fullName>Airway trypsin-like protease 4</fullName>
    </alternativeName>
</protein>
<keyword id="KW-1015">Disulfide bond</keyword>
<keyword id="KW-0378">Hydrolase</keyword>
<keyword id="KW-0472">Membrane</keyword>
<keyword id="KW-0645">Protease</keyword>
<keyword id="KW-1185">Reference proteome</keyword>
<keyword id="KW-0720">Serine protease</keyword>
<keyword id="KW-0735">Signal-anchor</keyword>
<keyword id="KW-0812">Transmembrane</keyword>
<keyword id="KW-1133">Transmembrane helix</keyword>
<dbReference type="EC" id="3.4.21.-"/>
<dbReference type="EMBL" id="AK028447">
    <property type="protein sequence ID" value="BAC25955.1"/>
    <property type="molecule type" value="mRNA"/>
</dbReference>
<dbReference type="EMBL" id="AK028587">
    <property type="protein sequence ID" value="BAC26020.1"/>
    <property type="molecule type" value="mRNA"/>
</dbReference>
<dbReference type="EMBL" id="AK029032">
    <property type="protein sequence ID" value="BAC26254.1"/>
    <property type="molecule type" value="mRNA"/>
</dbReference>
<dbReference type="EMBL" id="AK037173">
    <property type="protein sequence ID" value="BAC29734.1"/>
    <property type="molecule type" value="mRNA"/>
</dbReference>
<dbReference type="EMBL" id="BC132629">
    <property type="protein sequence ID" value="AAI32630.1"/>
    <property type="molecule type" value="mRNA"/>
</dbReference>
<dbReference type="CCDS" id="CCDS39125.1"/>
<dbReference type="RefSeq" id="NP_848845.1">
    <property type="nucleotide sequence ID" value="NM_178730.3"/>
</dbReference>
<dbReference type="RefSeq" id="XP_006534992.1">
    <property type="nucleotide sequence ID" value="XM_006534929.2"/>
</dbReference>
<dbReference type="RefSeq" id="XP_036021019.1">
    <property type="nucleotide sequence ID" value="XM_036165126.1"/>
</dbReference>
<dbReference type="SMR" id="Q8BHM9"/>
<dbReference type="BioGRID" id="232482">
    <property type="interactions" value="5"/>
</dbReference>
<dbReference type="FunCoup" id="Q8BHM9">
    <property type="interactions" value="11"/>
</dbReference>
<dbReference type="STRING" id="10090.ENSMUSP00000112252"/>
<dbReference type="MEROPS" id="S01.321"/>
<dbReference type="iPTMnet" id="Q8BHM9"/>
<dbReference type="PhosphoSitePlus" id="Q8BHM9"/>
<dbReference type="jPOST" id="Q8BHM9"/>
<dbReference type="PaxDb" id="10090-ENSMUSP00000112252"/>
<dbReference type="ProteomicsDB" id="259461"/>
<dbReference type="Antibodypedia" id="12702">
    <property type="antibodies" value="36 antibodies from 15 providers"/>
</dbReference>
<dbReference type="DNASU" id="243083"/>
<dbReference type="Ensembl" id="ENSMUST00000116553.9">
    <property type="protein sequence ID" value="ENSMUSP00000112252.3"/>
    <property type="gene ID" value="ENSMUSG00000048764.17"/>
</dbReference>
<dbReference type="GeneID" id="243083"/>
<dbReference type="KEGG" id="mmu:243083"/>
<dbReference type="UCSC" id="uc008xxs.1">
    <property type="organism name" value="mouse"/>
</dbReference>
<dbReference type="AGR" id="MGI:2442348"/>
<dbReference type="CTD" id="389208"/>
<dbReference type="MGI" id="MGI:2442348">
    <property type="gene designation" value="Tmprss11f"/>
</dbReference>
<dbReference type="VEuPathDB" id="HostDB:ENSMUSG00000048764"/>
<dbReference type="eggNOG" id="KOG3627">
    <property type="taxonomic scope" value="Eukaryota"/>
</dbReference>
<dbReference type="GeneTree" id="ENSGT00940000161680"/>
<dbReference type="HOGENOM" id="CLU_006842_19_0_1"/>
<dbReference type="InParanoid" id="Q8BHM9"/>
<dbReference type="OMA" id="NYGIRSS"/>
<dbReference type="OrthoDB" id="9425590at2759"/>
<dbReference type="PhylomeDB" id="Q8BHM9"/>
<dbReference type="TreeFam" id="TF351684"/>
<dbReference type="BioGRID-ORCS" id="243083">
    <property type="hits" value="2 hits in 77 CRISPR screens"/>
</dbReference>
<dbReference type="ChiTaRS" id="Tmprss11f">
    <property type="organism name" value="mouse"/>
</dbReference>
<dbReference type="PRO" id="PR:Q8BHM9"/>
<dbReference type="Proteomes" id="UP000000589">
    <property type="component" value="Chromosome 5"/>
</dbReference>
<dbReference type="RNAct" id="Q8BHM9">
    <property type="molecule type" value="protein"/>
</dbReference>
<dbReference type="Bgee" id="ENSMUSG00000048764">
    <property type="expression patterns" value="Expressed in esophagus and 19 other cell types or tissues"/>
</dbReference>
<dbReference type="GO" id="GO:0009986">
    <property type="term" value="C:cell surface"/>
    <property type="evidence" value="ECO:0000266"/>
    <property type="project" value="MGI"/>
</dbReference>
<dbReference type="GO" id="GO:0005576">
    <property type="term" value="C:extracellular region"/>
    <property type="evidence" value="ECO:0007669"/>
    <property type="project" value="InterPro"/>
</dbReference>
<dbReference type="GO" id="GO:0005886">
    <property type="term" value="C:plasma membrane"/>
    <property type="evidence" value="ECO:0007669"/>
    <property type="project" value="InterPro"/>
</dbReference>
<dbReference type="GO" id="GO:0004252">
    <property type="term" value="F:serine-type endopeptidase activity"/>
    <property type="evidence" value="ECO:0007669"/>
    <property type="project" value="InterPro"/>
</dbReference>
<dbReference type="GO" id="GO:0061436">
    <property type="term" value="P:establishment of skin barrier"/>
    <property type="evidence" value="ECO:0000315"/>
    <property type="project" value="MGI"/>
</dbReference>
<dbReference type="GO" id="GO:0006508">
    <property type="term" value="P:proteolysis"/>
    <property type="evidence" value="ECO:0007669"/>
    <property type="project" value="UniProtKB-KW"/>
</dbReference>
<dbReference type="CDD" id="cd00190">
    <property type="entry name" value="Tryp_SPc"/>
    <property type="match status" value="1"/>
</dbReference>
<dbReference type="FunFam" id="2.40.10.10:FF:000003">
    <property type="entry name" value="Transmembrane serine protease 3"/>
    <property type="match status" value="1"/>
</dbReference>
<dbReference type="Gene3D" id="3.30.70.960">
    <property type="entry name" value="SEA domain"/>
    <property type="match status" value="1"/>
</dbReference>
<dbReference type="Gene3D" id="2.40.10.10">
    <property type="entry name" value="Trypsin-like serine proteases"/>
    <property type="match status" value="2"/>
</dbReference>
<dbReference type="InterPro" id="IPR017329">
    <property type="entry name" value="Pept_S1A_HAT/DESC1"/>
</dbReference>
<dbReference type="InterPro" id="IPR009003">
    <property type="entry name" value="Peptidase_S1_PA"/>
</dbReference>
<dbReference type="InterPro" id="IPR043504">
    <property type="entry name" value="Peptidase_S1_PA_chymotrypsin"/>
</dbReference>
<dbReference type="InterPro" id="IPR001314">
    <property type="entry name" value="Peptidase_S1A"/>
</dbReference>
<dbReference type="InterPro" id="IPR000082">
    <property type="entry name" value="SEA_dom"/>
</dbReference>
<dbReference type="InterPro" id="IPR036364">
    <property type="entry name" value="SEA_dom_sf"/>
</dbReference>
<dbReference type="InterPro" id="IPR001254">
    <property type="entry name" value="Trypsin_dom"/>
</dbReference>
<dbReference type="InterPro" id="IPR018114">
    <property type="entry name" value="TRYPSIN_HIS"/>
</dbReference>
<dbReference type="InterPro" id="IPR033116">
    <property type="entry name" value="TRYPSIN_SER"/>
</dbReference>
<dbReference type="PANTHER" id="PTHR24252">
    <property type="entry name" value="ACROSIN-RELATED"/>
    <property type="match status" value="1"/>
</dbReference>
<dbReference type="PANTHER" id="PTHR24252:SF17">
    <property type="entry name" value="SUPPRESSOR OF TUMORIGENICITY 14 PROTEIN HOMOLOG-RELATED"/>
    <property type="match status" value="1"/>
</dbReference>
<dbReference type="Pfam" id="PF01390">
    <property type="entry name" value="SEA"/>
    <property type="match status" value="1"/>
</dbReference>
<dbReference type="Pfam" id="PF00089">
    <property type="entry name" value="Trypsin"/>
    <property type="match status" value="1"/>
</dbReference>
<dbReference type="PIRSF" id="PIRSF037941">
    <property type="entry name" value="TMPRSS11ABCDE"/>
    <property type="match status" value="1"/>
</dbReference>
<dbReference type="PRINTS" id="PR00722">
    <property type="entry name" value="CHYMOTRYPSIN"/>
</dbReference>
<dbReference type="SMART" id="SM00020">
    <property type="entry name" value="Tryp_SPc"/>
    <property type="match status" value="1"/>
</dbReference>
<dbReference type="SUPFAM" id="SSF82671">
    <property type="entry name" value="SEA domain"/>
    <property type="match status" value="1"/>
</dbReference>
<dbReference type="SUPFAM" id="SSF50494">
    <property type="entry name" value="Trypsin-like serine proteases"/>
    <property type="match status" value="1"/>
</dbReference>
<dbReference type="PROSITE" id="PS50024">
    <property type="entry name" value="SEA"/>
    <property type="match status" value="1"/>
</dbReference>
<dbReference type="PROSITE" id="PS50240">
    <property type="entry name" value="TRYPSIN_DOM"/>
    <property type="match status" value="1"/>
</dbReference>
<dbReference type="PROSITE" id="PS00134">
    <property type="entry name" value="TRYPSIN_HIS"/>
    <property type="match status" value="1"/>
</dbReference>
<dbReference type="PROSITE" id="PS00135">
    <property type="entry name" value="TRYPSIN_SER"/>
    <property type="match status" value="1"/>
</dbReference>
<evidence type="ECO:0000250" key="1"/>
<evidence type="ECO:0000255" key="2"/>
<evidence type="ECO:0000255" key="3">
    <source>
        <dbReference type="PROSITE-ProRule" id="PRU00188"/>
    </source>
</evidence>
<evidence type="ECO:0000255" key="4">
    <source>
        <dbReference type="PROSITE-ProRule" id="PRU00274"/>
    </source>
</evidence>
<evidence type="ECO:0000305" key="5"/>
<accession>Q8BHM9</accession>